<sequence>MSTPNLYDSTNKPLYGERLIEESKIICFDNPNKKRIYEISIELPEFTCKCPFSGYPDFAKLNIFYQPNSKVYELKSLKLYINHFRDLKISHEEVVNRIMDDLLNAAAPHWIHLNADFNPRGNVSMKLDIYSGQKRN</sequence>
<organism>
    <name type="scientific">Prochlorococcus marinus (strain MIT 9515)</name>
    <dbReference type="NCBI Taxonomy" id="167542"/>
    <lineage>
        <taxon>Bacteria</taxon>
        <taxon>Bacillati</taxon>
        <taxon>Cyanobacteriota</taxon>
        <taxon>Cyanophyceae</taxon>
        <taxon>Synechococcales</taxon>
        <taxon>Prochlorococcaceae</taxon>
        <taxon>Prochlorococcus</taxon>
    </lineage>
</organism>
<protein>
    <recommendedName>
        <fullName evidence="1">NADPH-dependent 7-cyano-7-deazaguanine reductase</fullName>
        <ecNumber evidence="1">1.7.1.13</ecNumber>
    </recommendedName>
    <alternativeName>
        <fullName evidence="1">7-cyano-7-carbaguanine reductase</fullName>
    </alternativeName>
    <alternativeName>
        <fullName evidence="1">NADPH-dependent nitrile oxidoreductase</fullName>
    </alternativeName>
    <alternativeName>
        <fullName evidence="1">PreQ(0) reductase</fullName>
    </alternativeName>
</protein>
<accession>A2BYI6</accession>
<dbReference type="EC" id="1.7.1.13" evidence="1"/>
<dbReference type="EMBL" id="CP000552">
    <property type="protein sequence ID" value="ABM72847.1"/>
    <property type="molecule type" value="Genomic_DNA"/>
</dbReference>
<dbReference type="RefSeq" id="WP_011820941.1">
    <property type="nucleotide sequence ID" value="NC_008817.1"/>
</dbReference>
<dbReference type="SMR" id="A2BYI6"/>
<dbReference type="STRING" id="167542.P9515_16401"/>
<dbReference type="GeneID" id="60200865"/>
<dbReference type="KEGG" id="pmc:P9515_16401"/>
<dbReference type="eggNOG" id="COG0780">
    <property type="taxonomic scope" value="Bacteria"/>
</dbReference>
<dbReference type="HOGENOM" id="CLU_102489_1_1_3"/>
<dbReference type="OrthoDB" id="9795077at2"/>
<dbReference type="UniPathway" id="UPA00392"/>
<dbReference type="Proteomes" id="UP000001589">
    <property type="component" value="Chromosome"/>
</dbReference>
<dbReference type="GO" id="GO:0005737">
    <property type="term" value="C:cytoplasm"/>
    <property type="evidence" value="ECO:0007669"/>
    <property type="project" value="UniProtKB-SubCell"/>
</dbReference>
<dbReference type="GO" id="GO:0033739">
    <property type="term" value="F:preQ1 synthase activity"/>
    <property type="evidence" value="ECO:0007669"/>
    <property type="project" value="UniProtKB-UniRule"/>
</dbReference>
<dbReference type="GO" id="GO:0008616">
    <property type="term" value="P:queuosine biosynthetic process"/>
    <property type="evidence" value="ECO:0007669"/>
    <property type="project" value="UniProtKB-UniRule"/>
</dbReference>
<dbReference type="GO" id="GO:0006400">
    <property type="term" value="P:tRNA modification"/>
    <property type="evidence" value="ECO:0007669"/>
    <property type="project" value="UniProtKB-UniRule"/>
</dbReference>
<dbReference type="Gene3D" id="3.30.1130.10">
    <property type="match status" value="1"/>
</dbReference>
<dbReference type="HAMAP" id="MF_00818">
    <property type="entry name" value="QueF_type1"/>
    <property type="match status" value="1"/>
</dbReference>
<dbReference type="InterPro" id="IPR043133">
    <property type="entry name" value="GTP-CH-I_C/QueF"/>
</dbReference>
<dbReference type="InterPro" id="IPR050084">
    <property type="entry name" value="NADPH_dep_7-cyano-7-deazaG_red"/>
</dbReference>
<dbReference type="InterPro" id="IPR029500">
    <property type="entry name" value="QueF"/>
</dbReference>
<dbReference type="InterPro" id="IPR016856">
    <property type="entry name" value="QueF_type1"/>
</dbReference>
<dbReference type="NCBIfam" id="TIGR03139">
    <property type="entry name" value="QueF-II"/>
    <property type="match status" value="1"/>
</dbReference>
<dbReference type="PANTHER" id="PTHR34354">
    <property type="entry name" value="NADPH-DEPENDENT 7-CYANO-7-DEAZAGUANINE REDUCTASE"/>
    <property type="match status" value="1"/>
</dbReference>
<dbReference type="PANTHER" id="PTHR34354:SF1">
    <property type="entry name" value="NADPH-DEPENDENT 7-CYANO-7-DEAZAGUANINE REDUCTASE"/>
    <property type="match status" value="1"/>
</dbReference>
<dbReference type="Pfam" id="PF14489">
    <property type="entry name" value="QueF"/>
    <property type="match status" value="1"/>
</dbReference>
<dbReference type="PIRSF" id="PIRSF027377">
    <property type="entry name" value="Nitrile_oxidored_QueF"/>
    <property type="match status" value="1"/>
</dbReference>
<dbReference type="SUPFAM" id="SSF55620">
    <property type="entry name" value="Tetrahydrobiopterin biosynthesis enzymes-like"/>
    <property type="match status" value="1"/>
</dbReference>
<gene>
    <name evidence="1" type="primary">queF</name>
    <name type="ordered locus">P9515_16401</name>
</gene>
<comment type="function">
    <text evidence="1">Catalyzes the NADPH-dependent reduction of 7-cyano-7-deazaguanine (preQ0) to 7-aminomethyl-7-deazaguanine (preQ1).</text>
</comment>
<comment type="catalytic activity">
    <reaction evidence="1">
        <text>7-aminomethyl-7-carbaguanine + 2 NADP(+) = 7-cyano-7-deazaguanine + 2 NADPH + 3 H(+)</text>
        <dbReference type="Rhea" id="RHEA:13409"/>
        <dbReference type="ChEBI" id="CHEBI:15378"/>
        <dbReference type="ChEBI" id="CHEBI:45075"/>
        <dbReference type="ChEBI" id="CHEBI:57783"/>
        <dbReference type="ChEBI" id="CHEBI:58349"/>
        <dbReference type="ChEBI" id="CHEBI:58703"/>
        <dbReference type="EC" id="1.7.1.13"/>
    </reaction>
</comment>
<comment type="pathway">
    <text evidence="1">tRNA modification; tRNA-queuosine biosynthesis.</text>
</comment>
<comment type="subcellular location">
    <subcellularLocation>
        <location evidence="1">Cytoplasm</location>
    </subcellularLocation>
</comment>
<comment type="similarity">
    <text evidence="1">Belongs to the GTP cyclohydrolase I family. QueF type 1 subfamily.</text>
</comment>
<reference key="1">
    <citation type="journal article" date="2007" name="PLoS Genet.">
        <title>Patterns and implications of gene gain and loss in the evolution of Prochlorococcus.</title>
        <authorList>
            <person name="Kettler G.C."/>
            <person name="Martiny A.C."/>
            <person name="Huang K."/>
            <person name="Zucker J."/>
            <person name="Coleman M.L."/>
            <person name="Rodrigue S."/>
            <person name="Chen F."/>
            <person name="Lapidus A."/>
            <person name="Ferriera S."/>
            <person name="Johnson J."/>
            <person name="Steglich C."/>
            <person name="Church G.M."/>
            <person name="Richardson P."/>
            <person name="Chisholm S.W."/>
        </authorList>
    </citation>
    <scope>NUCLEOTIDE SEQUENCE [LARGE SCALE GENOMIC DNA]</scope>
    <source>
        <strain>MIT 9515</strain>
    </source>
</reference>
<name>QUEF_PROM5</name>
<proteinExistence type="inferred from homology"/>
<keyword id="KW-0963">Cytoplasm</keyword>
<keyword id="KW-0521">NADP</keyword>
<keyword id="KW-0560">Oxidoreductase</keyword>
<keyword id="KW-0671">Queuosine biosynthesis</keyword>
<evidence type="ECO:0000255" key="1">
    <source>
        <dbReference type="HAMAP-Rule" id="MF_00818"/>
    </source>
</evidence>
<feature type="chain" id="PRO_1000062404" description="NADPH-dependent 7-cyano-7-deazaguanine reductase">
    <location>
        <begin position="1"/>
        <end position="136"/>
    </location>
</feature>
<feature type="active site" description="Thioimide intermediate" evidence="1">
    <location>
        <position position="50"/>
    </location>
</feature>
<feature type="active site" description="Proton donor" evidence="1">
    <location>
        <position position="57"/>
    </location>
</feature>
<feature type="binding site" evidence="1">
    <location>
        <begin position="72"/>
        <end position="74"/>
    </location>
    <ligand>
        <name>substrate</name>
    </ligand>
</feature>
<feature type="binding site" evidence="1">
    <location>
        <begin position="91"/>
        <end position="92"/>
    </location>
    <ligand>
        <name>substrate</name>
    </ligand>
</feature>